<evidence type="ECO:0000250" key="1">
    <source>
        <dbReference type="UniProtKB" id="O08719"/>
    </source>
</evidence>
<evidence type="ECO:0000250" key="2">
    <source>
        <dbReference type="UniProtKB" id="Q9UI08"/>
    </source>
</evidence>
<evidence type="ECO:0000255" key="3">
    <source>
        <dbReference type="PROSITE-ProRule" id="PRU00410"/>
    </source>
</evidence>
<evidence type="ECO:0000256" key="4">
    <source>
        <dbReference type="SAM" id="MobiDB-lite"/>
    </source>
</evidence>
<evidence type="ECO:0000269" key="5">
    <source>
    </source>
</evidence>
<evidence type="ECO:0000269" key="6">
    <source>
    </source>
</evidence>
<evidence type="ECO:0000269" key="7">
    <source>
    </source>
</evidence>
<evidence type="ECO:0000269" key="8">
    <source>
    </source>
</evidence>
<evidence type="ECO:0000269" key="9">
    <source>
    </source>
</evidence>
<evidence type="ECO:0000269" key="10">
    <source>
    </source>
</evidence>
<evidence type="ECO:0000303" key="11">
    <source>
    </source>
</evidence>
<evidence type="ECO:0000305" key="12"/>
<evidence type="ECO:0007744" key="13">
    <source>
    </source>
</evidence>
<evidence type="ECO:0007744" key="14">
    <source>
    </source>
</evidence>
<evidence type="ECO:0007829" key="15">
    <source>
        <dbReference type="PDB" id="1QC6"/>
    </source>
</evidence>
<comment type="function">
    <text evidence="6 8">Ena/VASP proteins are actin-associated proteins involved in a range of processes dependent on cytoskeleton remodeling and cell polarity such as axon guidance and lamellipodial and filopodial dynamics in migrating cells. EVL enhances actin nucleation and polymerization.</text>
</comment>
<comment type="subunit">
    <text evidence="2 6 7 8 9 10">Homotetramer (By similarity). Binds to the SH3 domains of ABL1, LYN and SRC (PubMed:10945997). Also binds to profilin, with preference for isoform IIa of PFN2, and the WW domain of APBB1/FE65 (PubMed:10945997). Binds to SEMA6A (PubMed:10993894). Interacts, via the Pro-rich region, with the C-terminal SH3 domain of DNMBP (PubMed:14506234). Interacts with RAPH1 (By similarity). Binds, via the EVH1 domain, the Pro-rich domain of Listeria monocytogenes actA (PubMed:10087267). Binds, via the EVH1 domain, the Pro-rich domain of ZYX. Interacts with FYB1. Interacts with ZDHHC17 (By similarity).</text>
</comment>
<comment type="subcellular location">
    <subcellularLocation>
        <location evidence="8">Cytoplasm</location>
        <location evidence="8">Cytoskeleton</location>
    </subcellularLocation>
    <subcellularLocation>
        <location evidence="8">Cytoplasm</location>
        <location evidence="8">Cytoskeleton</location>
        <location evidence="8">Stress fiber</location>
    </subcellularLocation>
    <subcellularLocation>
        <location evidence="8">Cell projection</location>
        <location evidence="8">Lamellipodium</location>
    </subcellularLocation>
    <text evidence="8">Targeted to the leading edge of lamellipodia and the distal tip of stress fibers through interaction with a number of proteins. In activated T-cells, localizes to the F-actin collar and the distal tip of microspikes.</text>
</comment>
<comment type="alternative products">
    <event type="alternative splicing"/>
    <isoform>
        <id>P70429-1</id>
        <name>2</name>
        <name>EVL-I</name>
        <sequence type="displayed"/>
    </isoform>
    <isoform>
        <id>P70429-2</id>
        <name>1</name>
        <sequence type="described" ref="VSP_004045"/>
    </isoform>
</comment>
<comment type="tissue specificity">
    <text evidence="5 8">Highest expression in thymus and spleen (at protein level). Low levels in placenta, ovary, testis, fat and lung (at protein level). Isoform 1 and isoform 2 are expressed in cortical neurons and glial cells.</text>
</comment>
<comment type="developmental stage">
    <text evidence="5">At an early stage, highly expressed in the branchial and pharyngeal arches, but not in the brain. Expression in the brain starts at 15 dpc (at protein level).</text>
</comment>
<comment type="domain">
    <text>The EVH2 domain is comprised of 3 regions. Block A is a thymosin-like domain required for G-actin binding. The KLKR motif within this block is essential for the G-actin binding and for actin polymerization. Block B is required for F-actin binding and subcellular location, and Block C for tetramerization.</text>
</comment>
<comment type="PTM">
    <text evidence="8">Phosphorylated by PKA; phosphorylation abolishes binding to SH3 domains of ABL and SRC.</text>
</comment>
<comment type="miscellaneous">
    <text>Required to transform actin polymerization into active movement for the propulsive force of Listeria monocytogenes.</text>
</comment>
<comment type="similarity">
    <text evidence="12">Belongs to the Ena/VASP family.</text>
</comment>
<gene>
    <name type="primary">Evl</name>
</gene>
<dbReference type="EMBL" id="U72519">
    <property type="protein sequence ID" value="AAC52862.1"/>
    <property type="molecule type" value="mRNA"/>
</dbReference>
<dbReference type="EMBL" id="AF279662">
    <property type="protein sequence ID" value="AAG23653.1"/>
    <property type="molecule type" value="mRNA"/>
</dbReference>
<dbReference type="CCDS" id="CCDS26161.1">
    <molecule id="P70429-2"/>
</dbReference>
<dbReference type="CCDS" id="CCDS49167.1">
    <molecule id="P70429-1"/>
</dbReference>
<dbReference type="RefSeq" id="NP_001156866.1">
    <molecule id="P70429-1"/>
    <property type="nucleotide sequence ID" value="NM_001163394.1"/>
</dbReference>
<dbReference type="RefSeq" id="NP_031991.3">
    <molecule id="P70429-2"/>
    <property type="nucleotide sequence ID" value="NM_007965.3"/>
</dbReference>
<dbReference type="PDB" id="1QC6">
    <property type="method" value="X-ray"/>
    <property type="resolution" value="2.60 A"/>
    <property type="chains" value="A/B=1-130"/>
</dbReference>
<dbReference type="PDBsum" id="1QC6"/>
<dbReference type="SMR" id="P70429"/>
<dbReference type="BioGRID" id="199547">
    <property type="interactions" value="18"/>
</dbReference>
<dbReference type="DIP" id="DIP-40886N"/>
<dbReference type="ELM" id="P70429"/>
<dbReference type="FunCoup" id="P70429">
    <property type="interactions" value="877"/>
</dbReference>
<dbReference type="IntAct" id="P70429">
    <property type="interactions" value="3"/>
</dbReference>
<dbReference type="MINT" id="P70429"/>
<dbReference type="STRING" id="10090.ENSMUSP00000021689"/>
<dbReference type="GlyGen" id="P70429">
    <property type="glycosylation" value="1 site, 1 O-linked glycan (1 site)"/>
</dbReference>
<dbReference type="iPTMnet" id="P70429"/>
<dbReference type="PhosphoSitePlus" id="P70429"/>
<dbReference type="jPOST" id="P70429"/>
<dbReference type="PaxDb" id="10090-ENSMUSP00000021689"/>
<dbReference type="ProteomicsDB" id="275699">
    <molecule id="P70429-1"/>
</dbReference>
<dbReference type="ProteomicsDB" id="275700">
    <molecule id="P70429-2"/>
</dbReference>
<dbReference type="Pumba" id="P70429"/>
<dbReference type="Antibodypedia" id="14371">
    <property type="antibodies" value="165 antibodies from 32 providers"/>
</dbReference>
<dbReference type="DNASU" id="14026"/>
<dbReference type="Ensembl" id="ENSMUST00000021689.14">
    <molecule id="P70429-1"/>
    <property type="protein sequence ID" value="ENSMUSP00000021689.7"/>
    <property type="gene ID" value="ENSMUSG00000021262.16"/>
</dbReference>
<dbReference type="Ensembl" id="ENSMUST00000077735.13">
    <molecule id="P70429-2"/>
    <property type="protein sequence ID" value="ENSMUSP00000076916.6"/>
    <property type="gene ID" value="ENSMUSG00000021262.16"/>
</dbReference>
<dbReference type="GeneID" id="14026"/>
<dbReference type="KEGG" id="mmu:14026"/>
<dbReference type="UCSC" id="uc007ozv.1">
    <molecule id="P70429-2"/>
    <property type="organism name" value="mouse"/>
</dbReference>
<dbReference type="UCSC" id="uc007ozw.1">
    <molecule id="P70429-1"/>
    <property type="organism name" value="mouse"/>
</dbReference>
<dbReference type="AGR" id="MGI:1194884"/>
<dbReference type="CTD" id="51466"/>
<dbReference type="MGI" id="MGI:1194884">
    <property type="gene designation" value="Evl"/>
</dbReference>
<dbReference type="VEuPathDB" id="HostDB:ENSMUSG00000021262"/>
<dbReference type="eggNOG" id="KOG4590">
    <property type="taxonomic scope" value="Eukaryota"/>
</dbReference>
<dbReference type="GeneTree" id="ENSGT00940000157826"/>
<dbReference type="HOGENOM" id="CLU_017790_0_0_1"/>
<dbReference type="InParanoid" id="P70429"/>
<dbReference type="OMA" id="RTHFGIN"/>
<dbReference type="PhylomeDB" id="P70429"/>
<dbReference type="TreeFam" id="TF321411"/>
<dbReference type="Reactome" id="R-MMU-376176">
    <property type="pathway name" value="Signaling by ROBO receptors"/>
</dbReference>
<dbReference type="Reactome" id="R-MMU-5663220">
    <property type="pathway name" value="RHO GTPases Activate Formins"/>
</dbReference>
<dbReference type="BioGRID-ORCS" id="14026">
    <property type="hits" value="4 hits in 76 CRISPR screens"/>
</dbReference>
<dbReference type="CD-CODE" id="CE726F99">
    <property type="entry name" value="Postsynaptic density"/>
</dbReference>
<dbReference type="ChiTaRS" id="Evl">
    <property type="organism name" value="mouse"/>
</dbReference>
<dbReference type="EvolutionaryTrace" id="P70429"/>
<dbReference type="PRO" id="PR:P70429"/>
<dbReference type="Proteomes" id="UP000000589">
    <property type="component" value="Chromosome 12"/>
</dbReference>
<dbReference type="RNAct" id="P70429">
    <property type="molecule type" value="protein"/>
</dbReference>
<dbReference type="Bgee" id="ENSMUSG00000021262">
    <property type="expression patterns" value="Expressed in peripheral lymph node and 257 other cell types or tissues"/>
</dbReference>
<dbReference type="ExpressionAtlas" id="P70429">
    <property type="expression patterns" value="baseline and differential"/>
</dbReference>
<dbReference type="GO" id="GO:0005737">
    <property type="term" value="C:cytoplasm"/>
    <property type="evidence" value="ECO:0000314"/>
    <property type="project" value="UniProtKB"/>
</dbReference>
<dbReference type="GO" id="GO:0005925">
    <property type="term" value="C:focal adhesion"/>
    <property type="evidence" value="ECO:0000314"/>
    <property type="project" value="UniProtKB"/>
</dbReference>
<dbReference type="GO" id="GO:0030027">
    <property type="term" value="C:lamellipodium"/>
    <property type="evidence" value="ECO:0000314"/>
    <property type="project" value="UniProtKB"/>
</dbReference>
<dbReference type="GO" id="GO:0045335">
    <property type="term" value="C:phagocytic vesicle"/>
    <property type="evidence" value="ECO:0000314"/>
    <property type="project" value="MGI"/>
</dbReference>
<dbReference type="GO" id="GO:0001725">
    <property type="term" value="C:stress fiber"/>
    <property type="evidence" value="ECO:0007669"/>
    <property type="project" value="UniProtKB-SubCell"/>
</dbReference>
<dbReference type="GO" id="GO:0003779">
    <property type="term" value="F:actin binding"/>
    <property type="evidence" value="ECO:0007669"/>
    <property type="project" value="UniProtKB-KW"/>
</dbReference>
<dbReference type="GO" id="GO:0005522">
    <property type="term" value="F:profilin binding"/>
    <property type="evidence" value="ECO:0000314"/>
    <property type="project" value="UniProtKB"/>
</dbReference>
<dbReference type="GO" id="GO:0017124">
    <property type="term" value="F:SH3 domain binding"/>
    <property type="evidence" value="ECO:0000314"/>
    <property type="project" value="UniProtKB"/>
</dbReference>
<dbReference type="GO" id="GO:0030048">
    <property type="term" value="P:actin filament-based movement"/>
    <property type="evidence" value="ECO:0000303"/>
    <property type="project" value="UniProtKB"/>
</dbReference>
<dbReference type="GO" id="GO:0045010">
    <property type="term" value="P:actin nucleation"/>
    <property type="evidence" value="ECO:0000303"/>
    <property type="project" value="UniProtKB"/>
</dbReference>
<dbReference type="GO" id="GO:0008154">
    <property type="term" value="P:actin polymerization or depolymerization"/>
    <property type="evidence" value="ECO:0000314"/>
    <property type="project" value="UniProtKB"/>
</dbReference>
<dbReference type="GO" id="GO:0007411">
    <property type="term" value="P:axon guidance"/>
    <property type="evidence" value="ECO:0000303"/>
    <property type="project" value="UniProtKB"/>
</dbReference>
<dbReference type="GO" id="GO:0051016">
    <property type="term" value="P:barbed-end actin filament capping"/>
    <property type="evidence" value="ECO:0000303"/>
    <property type="project" value="UniProtKB"/>
</dbReference>
<dbReference type="GO" id="GO:0071346">
    <property type="term" value="P:cellular response to type II interferon"/>
    <property type="evidence" value="ECO:0000314"/>
    <property type="project" value="MGI"/>
</dbReference>
<dbReference type="GO" id="GO:0030168">
    <property type="term" value="P:platelet activation"/>
    <property type="evidence" value="ECO:0000303"/>
    <property type="project" value="UniProtKB"/>
</dbReference>
<dbReference type="GO" id="GO:0030838">
    <property type="term" value="P:positive regulation of actin filament polymerization"/>
    <property type="evidence" value="ECO:0000314"/>
    <property type="project" value="UniProtKB"/>
</dbReference>
<dbReference type="GO" id="GO:0051289">
    <property type="term" value="P:protein homotetramerization"/>
    <property type="evidence" value="ECO:0007669"/>
    <property type="project" value="InterPro"/>
</dbReference>
<dbReference type="CDD" id="cd01207">
    <property type="entry name" value="EVH1_Ena_VASP-like"/>
    <property type="match status" value="1"/>
</dbReference>
<dbReference type="DisProt" id="DP02387"/>
<dbReference type="FunFam" id="1.20.5.1160:FF:000004">
    <property type="entry name" value="Enah/Vasp-like, isoform CRA_a"/>
    <property type="match status" value="1"/>
</dbReference>
<dbReference type="FunFam" id="2.30.29.30:FF:000071">
    <property type="entry name" value="Enah/Vasp-like, isoform CRA_a"/>
    <property type="match status" value="1"/>
</dbReference>
<dbReference type="Gene3D" id="2.30.29.30">
    <property type="entry name" value="Pleckstrin-homology domain (PH domain)/Phosphotyrosine-binding domain (PTB)"/>
    <property type="match status" value="1"/>
</dbReference>
<dbReference type="Gene3D" id="1.20.5.1160">
    <property type="entry name" value="Vasodilator-stimulated phosphoprotein"/>
    <property type="match status" value="1"/>
</dbReference>
<dbReference type="InterPro" id="IPR011993">
    <property type="entry name" value="PH-like_dom_sf"/>
</dbReference>
<dbReference type="InterPro" id="IPR017354">
    <property type="entry name" value="VASP/EVL"/>
</dbReference>
<dbReference type="InterPro" id="IPR038023">
    <property type="entry name" value="VASP_sf"/>
</dbReference>
<dbReference type="InterPro" id="IPR014885">
    <property type="entry name" value="VASP_tetra"/>
</dbReference>
<dbReference type="InterPro" id="IPR000697">
    <property type="entry name" value="WH1/EVH1_dom"/>
</dbReference>
<dbReference type="PANTHER" id="PTHR11202:SF4">
    <property type="entry name" value="ENA_VASP-LIKE PROTEIN"/>
    <property type="match status" value="1"/>
</dbReference>
<dbReference type="PANTHER" id="PTHR11202">
    <property type="entry name" value="SPROUTY-RELATED, EVH1 DOMAIN-CONTAINING PROTEIN FAMILY MEMBER"/>
    <property type="match status" value="1"/>
</dbReference>
<dbReference type="Pfam" id="PF08776">
    <property type="entry name" value="VASP_tetra"/>
    <property type="match status" value="1"/>
</dbReference>
<dbReference type="Pfam" id="PF00568">
    <property type="entry name" value="WH1"/>
    <property type="match status" value="1"/>
</dbReference>
<dbReference type="PIRSF" id="PIRSF038010">
    <property type="entry name" value="Vasodilator_Phospo"/>
    <property type="match status" value="1"/>
</dbReference>
<dbReference type="SMART" id="SM00461">
    <property type="entry name" value="WH1"/>
    <property type="match status" value="1"/>
</dbReference>
<dbReference type="SUPFAM" id="SSF50729">
    <property type="entry name" value="PH domain-like"/>
    <property type="match status" value="1"/>
</dbReference>
<dbReference type="SUPFAM" id="SSF118370">
    <property type="entry name" value="Vasodilator-stimulated phosphoprotein, VASP, tetramerisation domain"/>
    <property type="match status" value="1"/>
</dbReference>
<dbReference type="PROSITE" id="PS50229">
    <property type="entry name" value="WH1"/>
    <property type="match status" value="1"/>
</dbReference>
<reference key="1">
    <citation type="journal article" date="1996" name="Cell">
        <title>Mena, a relative of VASP and Drosophila Enabled, is implicated in the control of microfilament dynamics.</title>
        <authorList>
            <person name="Gertler F.B."/>
            <person name="Niebuhr K."/>
            <person name="Reinhard M."/>
            <person name="Wehland J."/>
            <person name="Soriano P."/>
        </authorList>
    </citation>
    <scope>NUCLEOTIDE SEQUENCE [MRNA] (ISOFORM 1)</scope>
    <source>
        <tissue>Brain</tissue>
    </source>
</reference>
<reference key="2">
    <citation type="journal article" date="2000" name="J. Biol. Chem.">
        <title>cAMP-dependent protein kinase phosphorylation of EVL, a Mena/VASP relative, regulates its interaction with actin and SH3 domains.</title>
        <authorList>
            <person name="Lambrechts A."/>
            <person name="Kwiatkowski A.V."/>
            <person name="Lanier L.M."/>
            <person name="Bear J.E."/>
            <person name="Vandekerckhove J."/>
            <person name="Ampe C."/>
            <person name="Gertler F.B."/>
        </authorList>
    </citation>
    <scope>NUCLEOTIDE SEQUENCE [MRNA] (ISOFORM 2)</scope>
    <scope>FUNCTION</scope>
    <scope>INTERACTION WITH PFN2; LYN; APBB1; ABL1 AND SRC</scope>
    <scope>SUBCELLULAR LOCATION</scope>
    <scope>TISSUE SPECIFICITY</scope>
    <scope>PHOSPHORYLATION BY PKA</scope>
    <source>
        <strain>C57BL/6J</strain>
    </source>
</reference>
<reference key="3">
    <citation type="journal article" date="1999" name="J. Cell Biol.">
        <title>Role of proteins of the Ena/VASP family in actin-based motility of Listeria monocytogenes.</title>
        <authorList>
            <person name="Laurent V."/>
            <person name="Loisel T.P."/>
            <person name="Harbeck B."/>
            <person name="Wehman A."/>
            <person name="Groebe L."/>
            <person name="Jockusch B.M."/>
            <person name="Wehland J."/>
            <person name="Gertler F.B."/>
            <person name="Carlier M.-F."/>
        </authorList>
    </citation>
    <scope>ROLE IN L.MONOCYTOGENES MOBILITY</scope>
    <scope>MISCELLANEOUS</scope>
    <scope>INTERACTION WITH L.MONOCYTOGENES ACTA</scope>
</reference>
<reference key="4">
    <citation type="journal article" date="1999" name="Neuron">
        <title>Mena is required for neurulation and commissure formation.</title>
        <authorList>
            <person name="Lanier L.M."/>
            <person name="Gates M.A."/>
            <person name="Witke W."/>
            <person name="Menzies A.S."/>
            <person name="Wehman A.M."/>
            <person name="Macklis J.D."/>
            <person name="Kwiatkowski D."/>
            <person name="Soriano P."/>
            <person name="Gertler F.B."/>
        </authorList>
    </citation>
    <scope>DEVELOPMENTAL STAGE</scope>
    <scope>TISSUE SPECIFICITY</scope>
</reference>
<reference key="5">
    <citation type="journal article" date="2000" name="J. Biol. Chem.">
        <title>The orthologous human and murine semaphorin 6A-1 proteins (SEMA6A-1/Sema6A-1) bind to the enabled/vasodilator-stimulated phosphoprotein-like protein (EVL) via a novel carboxyl-terminal zyxin-like domain.</title>
        <authorList>
            <person name="Klostermann A."/>
            <person name="Lutz B."/>
            <person name="Gertler F."/>
            <person name="Behl C."/>
        </authorList>
    </citation>
    <scope>INTERACTION WITH SEMA6A</scope>
</reference>
<reference key="6">
    <citation type="journal article" date="2003" name="J. Biol. Chem.">
        <title>Tuba, a novel protein containing bin/amphiphysin/Rvs and Dbl homology domains, links dynamin to regulation of the actin cytoskeleton.</title>
        <authorList>
            <person name="Salazar M.A."/>
            <person name="Kwiatkowski A.V."/>
            <person name="Pellegrini L."/>
            <person name="Cestra G."/>
            <person name="Butler M.H."/>
            <person name="Rossman K.L."/>
            <person name="Serna D.M."/>
            <person name="Sondek J."/>
            <person name="Gertler F.B."/>
            <person name="De Camilli P."/>
        </authorList>
    </citation>
    <scope>INTERACTION WITH DNMBP</scope>
</reference>
<reference key="7">
    <citation type="journal article" date="2009" name="Immunity">
        <title>The phagosomal proteome in interferon-gamma-activated macrophages.</title>
        <authorList>
            <person name="Trost M."/>
            <person name="English L."/>
            <person name="Lemieux S."/>
            <person name="Courcelles M."/>
            <person name="Desjardins M."/>
            <person name="Thibault P."/>
        </authorList>
    </citation>
    <scope>PHOSPHORYLATION [LARGE SCALE ANALYSIS] AT SER-367</scope>
    <scope>IDENTIFICATION BY MASS SPECTROMETRY [LARGE SCALE ANALYSIS]</scope>
</reference>
<reference key="8">
    <citation type="journal article" date="2010" name="Cell">
        <title>A tissue-specific atlas of mouse protein phosphorylation and expression.</title>
        <authorList>
            <person name="Huttlin E.L."/>
            <person name="Jedrychowski M.P."/>
            <person name="Elias J.E."/>
            <person name="Goswami T."/>
            <person name="Rad R."/>
            <person name="Beausoleil S.A."/>
            <person name="Villen J."/>
            <person name="Haas W."/>
            <person name="Sowa M.E."/>
            <person name="Gygi S.P."/>
        </authorList>
    </citation>
    <scope>PHOSPHORYLATION [LARGE SCALE ANALYSIS] AT SER-329 AND SER-367</scope>
    <scope>IDENTIFICATION BY MASS SPECTROMETRY [LARGE SCALE ANALYSIS]</scope>
    <source>
        <tissue>Brain</tissue>
        <tissue>Brown adipose tissue</tissue>
        <tissue>Heart</tissue>
        <tissue>Kidney</tissue>
        <tissue>Liver</tissue>
        <tissue>Lung</tissue>
        <tissue>Spleen</tissue>
        <tissue>Testis</tissue>
    </source>
</reference>
<reference key="9">
    <citation type="journal article" date="1999" name="Nat. Struct. Biol.">
        <title>Structure of EVH1, a novel proline-rich ligand-binding module involved in cytoskeletal dynamics and neural function.</title>
        <authorList>
            <person name="Fedorov A.A."/>
            <person name="Fedorov E."/>
            <person name="Gertler F."/>
            <person name="Almo S.C."/>
        </authorList>
    </citation>
    <scope>X-RAY CRYSTALLOGRAPHY (2.6 ANGSTROMS) OF 1-130 IN COMPLEX WITH A SYNTHETIC PRO-RICH PEPTIDE</scope>
</reference>
<feature type="chain" id="PRO_0000087105" description="Ena/VASP-like protein">
    <location>
        <begin position="1"/>
        <end position="414"/>
    </location>
</feature>
<feature type="domain" description="WH1" evidence="3">
    <location>
        <begin position="1"/>
        <end position="112"/>
    </location>
</feature>
<feature type="region of interest" description="Disordered" evidence="4">
    <location>
        <begin position="157"/>
        <end position="369"/>
    </location>
</feature>
<feature type="region of interest" description="EVH2">
    <location>
        <begin position="220"/>
        <end position="411"/>
    </location>
</feature>
<feature type="region of interest" description="EVH2 block A">
    <location>
        <begin position="220"/>
        <end position="240"/>
    </location>
</feature>
<feature type="region of interest" description="EVH2 block B">
    <location>
        <begin position="263"/>
        <end position="280"/>
    </location>
</feature>
<feature type="region of interest" description="Required for interaction with ZDHHC17" evidence="2">
    <location>
        <begin position="340"/>
        <end position="360"/>
    </location>
</feature>
<feature type="region of interest" description="EVH2 block C">
    <location>
        <begin position="377"/>
        <end position="411"/>
    </location>
</feature>
<feature type="short sequence motif" description="KLKR">
    <location>
        <begin position="229"/>
        <end position="232"/>
    </location>
</feature>
<feature type="compositionally biased region" description="Pro residues" evidence="4">
    <location>
        <begin position="179"/>
        <end position="204"/>
    </location>
</feature>
<feature type="compositionally biased region" description="Low complexity" evidence="4">
    <location>
        <begin position="217"/>
        <end position="228"/>
    </location>
</feature>
<feature type="compositionally biased region" description="Low complexity" evidence="4">
    <location>
        <begin position="240"/>
        <end position="251"/>
    </location>
</feature>
<feature type="compositionally biased region" description="Polar residues" evidence="4">
    <location>
        <begin position="297"/>
        <end position="318"/>
    </location>
</feature>
<feature type="compositionally biased region" description="Basic and acidic residues" evidence="4">
    <location>
        <begin position="319"/>
        <end position="329"/>
    </location>
</feature>
<feature type="modified residue" description="Phosphoserine" evidence="1">
    <location>
        <position position="130"/>
    </location>
</feature>
<feature type="modified residue" description="Phosphoserine" evidence="2">
    <location>
        <position position="244"/>
    </location>
</feature>
<feature type="modified residue" description="Phosphoserine" evidence="1">
    <location>
        <position position="257"/>
    </location>
</feature>
<feature type="modified residue" description="Phosphoserine" evidence="2">
    <location>
        <position position="302"/>
    </location>
</feature>
<feature type="modified residue" description="Phosphoserine" evidence="2">
    <location>
        <position position="304"/>
    </location>
</feature>
<feature type="modified residue" description="Phosphoserine" evidence="2">
    <location>
        <position position="327"/>
    </location>
</feature>
<feature type="modified residue" description="Phosphoserine" evidence="14">
    <location>
        <position position="329"/>
    </location>
</feature>
<feature type="modified residue" description="Phosphoserine" evidence="2">
    <location>
        <position position="339"/>
    </location>
</feature>
<feature type="modified residue" description="Phosphoserine" evidence="2">
    <location>
        <position position="347"/>
    </location>
</feature>
<feature type="modified residue" description="Phosphoserine" evidence="2">
    <location>
        <position position="352"/>
    </location>
</feature>
<feature type="modified residue" description="Phosphoserine" evidence="13 14">
    <location>
        <position position="367"/>
    </location>
</feature>
<feature type="splice variant" id="VSP_004045" description="In isoform 1." evidence="11">
    <location>
        <begin position="339"/>
        <end position="359"/>
    </location>
</feature>
<feature type="strand" evidence="15">
    <location>
        <begin position="4"/>
        <end position="17"/>
    </location>
</feature>
<feature type="turn" evidence="15">
    <location>
        <begin position="18"/>
        <end position="21"/>
    </location>
</feature>
<feature type="strand" evidence="15">
    <location>
        <begin position="22"/>
        <end position="25"/>
    </location>
</feature>
<feature type="strand" evidence="15">
    <location>
        <begin position="34"/>
        <end position="41"/>
    </location>
</feature>
<feature type="turn" evidence="15">
    <location>
        <begin position="42"/>
        <end position="45"/>
    </location>
</feature>
<feature type="strand" evidence="15">
    <location>
        <begin position="46"/>
        <end position="52"/>
    </location>
</feature>
<feature type="turn" evidence="15">
    <location>
        <begin position="54"/>
        <end position="56"/>
    </location>
</feature>
<feature type="strand" evidence="15">
    <location>
        <begin position="59"/>
        <end position="64"/>
    </location>
</feature>
<feature type="strand" evidence="15">
    <location>
        <begin position="70"/>
        <end position="75"/>
    </location>
</feature>
<feature type="strand" evidence="15">
    <location>
        <begin position="78"/>
        <end position="82"/>
    </location>
</feature>
<feature type="strand" evidence="15">
    <location>
        <begin position="87"/>
        <end position="93"/>
    </location>
</feature>
<feature type="helix" evidence="15">
    <location>
        <begin position="95"/>
        <end position="111"/>
    </location>
</feature>
<organism>
    <name type="scientific">Mus musculus</name>
    <name type="common">Mouse</name>
    <dbReference type="NCBI Taxonomy" id="10090"/>
    <lineage>
        <taxon>Eukaryota</taxon>
        <taxon>Metazoa</taxon>
        <taxon>Chordata</taxon>
        <taxon>Craniata</taxon>
        <taxon>Vertebrata</taxon>
        <taxon>Euteleostomi</taxon>
        <taxon>Mammalia</taxon>
        <taxon>Eutheria</taxon>
        <taxon>Euarchontoglires</taxon>
        <taxon>Glires</taxon>
        <taxon>Rodentia</taxon>
        <taxon>Myomorpha</taxon>
        <taxon>Muroidea</taxon>
        <taxon>Muridae</taxon>
        <taxon>Murinae</taxon>
        <taxon>Mus</taxon>
        <taxon>Mus</taxon>
    </lineage>
</organism>
<name>EVL_MOUSE</name>
<protein>
    <recommendedName>
        <fullName>Ena/VASP-like protein</fullName>
    </recommendedName>
    <alternativeName>
        <fullName>Ena/vasodilator-stimulated phosphoprotein-like</fullName>
    </alternativeName>
</protein>
<keyword id="KW-0002">3D-structure</keyword>
<keyword id="KW-0009">Actin-binding</keyword>
<keyword id="KW-0025">Alternative splicing</keyword>
<keyword id="KW-0966">Cell projection</keyword>
<keyword id="KW-0963">Cytoplasm</keyword>
<keyword id="KW-0206">Cytoskeleton</keyword>
<keyword id="KW-0597">Phosphoprotein</keyword>
<keyword id="KW-1185">Reference proteome</keyword>
<keyword id="KW-0729">SH3-binding</keyword>
<accession>P70429</accession>
<accession>Q9ERU8</accession>
<sequence length="414" mass="44337">MSEQSICQARASVMVYDDTSKKWVPIKPGQQGFSRINIYHNTASSTFRVVGVKLQDQQVVINYSIVKGLKYNQATPTFHQWRDARQVYGLNFASKEEATTFSNAMLFALNIMNSQEGGPSTQRQVQNGPSPEEMDIQRRQVMEQQHRQESLERRISATGPILPPGHPSSAASTTLSCSGPPPPPPPPVPPPPTGSTPPPPPPLPAGGAQGTNHDESSASGLAAALAGAKLRRVQRPEDASGGSSPSGTSKSDANRASSGGGGGGLMEEMNKLLAKRRKAASQTDKPADRKEDESQTEDPSTSPSPGTRATSQPPNSSEAGRKPWERSNSVEKPVSSLLSRTPSVAKSPEAKSPLQSQPHSRVKPAGSVNDVGLDALDLDRMKQEILEEVVRELHKVKEEIIDAIRQELSGISTT</sequence>
<proteinExistence type="evidence at protein level"/>